<proteinExistence type="inferred from homology"/>
<comment type="similarity">
    <text evidence="1">Belongs to the universal ribosomal protein uL29 family.</text>
</comment>
<dbReference type="EMBL" id="AE000782">
    <property type="protein sequence ID" value="AAB89356.1"/>
    <property type="molecule type" value="Genomic_DNA"/>
</dbReference>
<dbReference type="PIR" id="E69489">
    <property type="entry name" value="E69489"/>
</dbReference>
<dbReference type="SMR" id="O28361"/>
<dbReference type="STRING" id="224325.AF_1918"/>
<dbReference type="PaxDb" id="224325-AF_1918"/>
<dbReference type="EnsemblBacteria" id="AAB89356">
    <property type="protein sequence ID" value="AAB89356"/>
    <property type="gene ID" value="AF_1918"/>
</dbReference>
<dbReference type="KEGG" id="afu:AF_1918"/>
<dbReference type="eggNOG" id="arCOG00785">
    <property type="taxonomic scope" value="Archaea"/>
</dbReference>
<dbReference type="HOGENOM" id="CLU_158491_2_2_2"/>
<dbReference type="Proteomes" id="UP000002199">
    <property type="component" value="Chromosome"/>
</dbReference>
<dbReference type="GO" id="GO:1990904">
    <property type="term" value="C:ribonucleoprotein complex"/>
    <property type="evidence" value="ECO:0007669"/>
    <property type="project" value="UniProtKB-KW"/>
</dbReference>
<dbReference type="GO" id="GO:0005840">
    <property type="term" value="C:ribosome"/>
    <property type="evidence" value="ECO:0007669"/>
    <property type="project" value="UniProtKB-KW"/>
</dbReference>
<dbReference type="GO" id="GO:0003735">
    <property type="term" value="F:structural constituent of ribosome"/>
    <property type="evidence" value="ECO:0007669"/>
    <property type="project" value="InterPro"/>
</dbReference>
<dbReference type="GO" id="GO:0006412">
    <property type="term" value="P:translation"/>
    <property type="evidence" value="ECO:0007669"/>
    <property type="project" value="UniProtKB-UniRule"/>
</dbReference>
<dbReference type="Gene3D" id="1.10.287.310">
    <property type="match status" value="1"/>
</dbReference>
<dbReference type="HAMAP" id="MF_00374">
    <property type="entry name" value="Ribosomal_uL29"/>
    <property type="match status" value="1"/>
</dbReference>
<dbReference type="InterPro" id="IPR001854">
    <property type="entry name" value="Ribosomal_uL29"/>
</dbReference>
<dbReference type="InterPro" id="IPR018254">
    <property type="entry name" value="Ribosomal_uL29_CS"/>
</dbReference>
<dbReference type="InterPro" id="IPR036049">
    <property type="entry name" value="Ribosomal_uL29_sf"/>
</dbReference>
<dbReference type="NCBIfam" id="TIGR00012">
    <property type="entry name" value="L29"/>
    <property type="match status" value="1"/>
</dbReference>
<dbReference type="Pfam" id="PF00831">
    <property type="entry name" value="Ribosomal_L29"/>
    <property type="match status" value="1"/>
</dbReference>
<dbReference type="SUPFAM" id="SSF46561">
    <property type="entry name" value="Ribosomal protein L29 (L29p)"/>
    <property type="match status" value="1"/>
</dbReference>
<dbReference type="PROSITE" id="PS00579">
    <property type="entry name" value="RIBOSOMAL_L29"/>
    <property type="match status" value="1"/>
</dbReference>
<keyword id="KW-1185">Reference proteome</keyword>
<keyword id="KW-0687">Ribonucleoprotein</keyword>
<keyword id="KW-0689">Ribosomal protein</keyword>
<reference key="1">
    <citation type="journal article" date="1997" name="Nature">
        <title>The complete genome sequence of the hyperthermophilic, sulphate-reducing archaeon Archaeoglobus fulgidus.</title>
        <authorList>
            <person name="Klenk H.-P."/>
            <person name="Clayton R.A."/>
            <person name="Tomb J.-F."/>
            <person name="White O."/>
            <person name="Nelson K.E."/>
            <person name="Ketchum K.A."/>
            <person name="Dodson R.J."/>
            <person name="Gwinn M.L."/>
            <person name="Hickey E.K."/>
            <person name="Peterson J.D."/>
            <person name="Richardson D.L."/>
            <person name="Kerlavage A.R."/>
            <person name="Graham D.E."/>
            <person name="Kyrpides N.C."/>
            <person name="Fleischmann R.D."/>
            <person name="Quackenbush J."/>
            <person name="Lee N.H."/>
            <person name="Sutton G.G."/>
            <person name="Gill S.R."/>
            <person name="Kirkness E.F."/>
            <person name="Dougherty B.A."/>
            <person name="McKenney K."/>
            <person name="Adams M.D."/>
            <person name="Loftus B.J."/>
            <person name="Peterson S.N."/>
            <person name="Reich C.I."/>
            <person name="McNeil L.K."/>
            <person name="Badger J.H."/>
            <person name="Glodek A."/>
            <person name="Zhou L."/>
            <person name="Overbeek R."/>
            <person name="Gocayne J.D."/>
            <person name="Weidman J.F."/>
            <person name="McDonald L.A."/>
            <person name="Utterback T.R."/>
            <person name="Cotton M.D."/>
            <person name="Spriggs T."/>
            <person name="Artiach P."/>
            <person name="Kaine B.P."/>
            <person name="Sykes S.M."/>
            <person name="Sadow P.W."/>
            <person name="D'Andrea K.P."/>
            <person name="Bowman C."/>
            <person name="Fujii C."/>
            <person name="Garland S.A."/>
            <person name="Mason T.M."/>
            <person name="Olsen G.J."/>
            <person name="Fraser C.M."/>
            <person name="Smith H.O."/>
            <person name="Woese C.R."/>
            <person name="Venter J.C."/>
        </authorList>
    </citation>
    <scope>NUCLEOTIDE SEQUENCE [LARGE SCALE GENOMIC DNA]</scope>
    <source>
        <strain>ATCC 49558 / DSM 4304 / JCM 9628 / NBRC 100126 / VC-16</strain>
    </source>
</reference>
<protein>
    <recommendedName>
        <fullName evidence="1">Large ribosomal subunit protein uL29</fullName>
    </recommendedName>
    <alternativeName>
        <fullName>50S ribosomal protein L29</fullName>
    </alternativeName>
</protein>
<evidence type="ECO:0000305" key="1"/>
<name>RL29_ARCFU</name>
<organism>
    <name type="scientific">Archaeoglobus fulgidus (strain ATCC 49558 / DSM 4304 / JCM 9628 / NBRC 100126 / VC-16)</name>
    <dbReference type="NCBI Taxonomy" id="224325"/>
    <lineage>
        <taxon>Archaea</taxon>
        <taxon>Methanobacteriati</taxon>
        <taxon>Methanobacteriota</taxon>
        <taxon>Archaeoglobi</taxon>
        <taxon>Archaeoglobales</taxon>
        <taxon>Archaeoglobaceae</taxon>
        <taxon>Archaeoglobus</taxon>
    </lineage>
</organism>
<sequence length="68" mass="8010">MKAVKMKEIREMSREEKLRKLRELELELLKLRTLVRSGGAVENPGRINLIRKDIARLKMALCEEGYRV</sequence>
<feature type="chain" id="PRO_0000130507" description="Large ribosomal subunit protein uL29">
    <location>
        <begin position="1"/>
        <end position="68"/>
    </location>
</feature>
<accession>O28361</accession>
<gene>
    <name type="primary">rpl29</name>
    <name type="ordered locus">AF_1918</name>
</gene>